<gene>
    <name evidence="1" type="primary">ileS</name>
    <name type="ordered locus">SA1036</name>
</gene>
<proteinExistence type="evidence at protein level"/>
<accession>P67509</accession>
<accession>Q99US4</accession>
<evidence type="ECO:0000255" key="1">
    <source>
        <dbReference type="HAMAP-Rule" id="MF_02002"/>
    </source>
</evidence>
<dbReference type="EC" id="6.1.1.5" evidence="1"/>
<dbReference type="EMBL" id="BA000018">
    <property type="protein sequence ID" value="BAB42288.1"/>
    <property type="molecule type" value="Genomic_DNA"/>
</dbReference>
<dbReference type="PIR" id="D89891">
    <property type="entry name" value="D89891"/>
</dbReference>
<dbReference type="RefSeq" id="WP_000384691.1">
    <property type="nucleotide sequence ID" value="NC_002745.2"/>
</dbReference>
<dbReference type="SMR" id="P67509"/>
<dbReference type="EnsemblBacteria" id="BAB42288">
    <property type="protein sequence ID" value="BAB42288"/>
    <property type="gene ID" value="BAB42288"/>
</dbReference>
<dbReference type="KEGG" id="sau:SA1036"/>
<dbReference type="HOGENOM" id="CLU_001493_7_1_9"/>
<dbReference type="GO" id="GO:0005829">
    <property type="term" value="C:cytosol"/>
    <property type="evidence" value="ECO:0007669"/>
    <property type="project" value="TreeGrafter"/>
</dbReference>
<dbReference type="GO" id="GO:0002161">
    <property type="term" value="F:aminoacyl-tRNA deacylase activity"/>
    <property type="evidence" value="ECO:0007669"/>
    <property type="project" value="InterPro"/>
</dbReference>
<dbReference type="GO" id="GO:0005524">
    <property type="term" value="F:ATP binding"/>
    <property type="evidence" value="ECO:0007669"/>
    <property type="project" value="UniProtKB-UniRule"/>
</dbReference>
<dbReference type="GO" id="GO:0004822">
    <property type="term" value="F:isoleucine-tRNA ligase activity"/>
    <property type="evidence" value="ECO:0007669"/>
    <property type="project" value="UniProtKB-UniRule"/>
</dbReference>
<dbReference type="GO" id="GO:0000049">
    <property type="term" value="F:tRNA binding"/>
    <property type="evidence" value="ECO:0007669"/>
    <property type="project" value="InterPro"/>
</dbReference>
<dbReference type="GO" id="GO:0008270">
    <property type="term" value="F:zinc ion binding"/>
    <property type="evidence" value="ECO:0007669"/>
    <property type="project" value="UniProtKB-UniRule"/>
</dbReference>
<dbReference type="GO" id="GO:0006428">
    <property type="term" value="P:isoleucyl-tRNA aminoacylation"/>
    <property type="evidence" value="ECO:0007669"/>
    <property type="project" value="UniProtKB-UniRule"/>
</dbReference>
<dbReference type="CDD" id="cd07960">
    <property type="entry name" value="Anticodon_Ia_Ile_BEm"/>
    <property type="match status" value="1"/>
</dbReference>
<dbReference type="CDD" id="cd00818">
    <property type="entry name" value="IleRS_core"/>
    <property type="match status" value="1"/>
</dbReference>
<dbReference type="FunFam" id="1.10.10.830:FF:000001">
    <property type="entry name" value="Isoleucine--tRNA ligase"/>
    <property type="match status" value="1"/>
</dbReference>
<dbReference type="FunFam" id="1.10.730.20:FF:000001">
    <property type="entry name" value="Isoleucine--tRNA ligase"/>
    <property type="match status" value="1"/>
</dbReference>
<dbReference type="FunFam" id="3.40.50.620:FF:000152">
    <property type="entry name" value="Isoleucine--tRNA ligase"/>
    <property type="match status" value="1"/>
</dbReference>
<dbReference type="FunFam" id="3.90.740.10:FF:000006">
    <property type="entry name" value="Isoleucine--tRNA ligase"/>
    <property type="match status" value="1"/>
</dbReference>
<dbReference type="Gene3D" id="1.10.730.20">
    <property type="match status" value="1"/>
</dbReference>
<dbReference type="Gene3D" id="3.40.50.620">
    <property type="entry name" value="HUPs"/>
    <property type="match status" value="2"/>
</dbReference>
<dbReference type="Gene3D" id="1.10.10.830">
    <property type="entry name" value="Ile-tRNA synthetase CP2 domain-like"/>
    <property type="match status" value="1"/>
</dbReference>
<dbReference type="HAMAP" id="MF_02002">
    <property type="entry name" value="Ile_tRNA_synth_type1"/>
    <property type="match status" value="1"/>
</dbReference>
<dbReference type="InterPro" id="IPR001412">
    <property type="entry name" value="aa-tRNA-synth_I_CS"/>
</dbReference>
<dbReference type="InterPro" id="IPR002300">
    <property type="entry name" value="aa-tRNA-synth_Ia"/>
</dbReference>
<dbReference type="InterPro" id="IPR033708">
    <property type="entry name" value="Anticodon_Ile_BEm"/>
</dbReference>
<dbReference type="InterPro" id="IPR002301">
    <property type="entry name" value="Ile-tRNA-ligase"/>
</dbReference>
<dbReference type="InterPro" id="IPR023585">
    <property type="entry name" value="Ile-tRNA-ligase_type1"/>
</dbReference>
<dbReference type="InterPro" id="IPR050081">
    <property type="entry name" value="Ile-tRNA_ligase"/>
</dbReference>
<dbReference type="InterPro" id="IPR013155">
    <property type="entry name" value="M/V/L/I-tRNA-synth_anticd-bd"/>
</dbReference>
<dbReference type="InterPro" id="IPR014729">
    <property type="entry name" value="Rossmann-like_a/b/a_fold"/>
</dbReference>
<dbReference type="InterPro" id="IPR009080">
    <property type="entry name" value="tRNAsynth_Ia_anticodon-bd"/>
</dbReference>
<dbReference type="InterPro" id="IPR009008">
    <property type="entry name" value="Val/Leu/Ile-tRNA-synth_edit"/>
</dbReference>
<dbReference type="InterPro" id="IPR010663">
    <property type="entry name" value="Znf_FPG/IleRS"/>
</dbReference>
<dbReference type="NCBIfam" id="TIGR00392">
    <property type="entry name" value="ileS"/>
    <property type="match status" value="1"/>
</dbReference>
<dbReference type="PANTHER" id="PTHR42765:SF1">
    <property type="entry name" value="ISOLEUCINE--TRNA LIGASE, MITOCHONDRIAL"/>
    <property type="match status" value="1"/>
</dbReference>
<dbReference type="PANTHER" id="PTHR42765">
    <property type="entry name" value="SOLEUCYL-TRNA SYNTHETASE"/>
    <property type="match status" value="1"/>
</dbReference>
<dbReference type="Pfam" id="PF08264">
    <property type="entry name" value="Anticodon_1"/>
    <property type="match status" value="1"/>
</dbReference>
<dbReference type="Pfam" id="PF00133">
    <property type="entry name" value="tRNA-synt_1"/>
    <property type="match status" value="1"/>
</dbReference>
<dbReference type="Pfam" id="PF06827">
    <property type="entry name" value="zf-FPG_IleRS"/>
    <property type="match status" value="1"/>
</dbReference>
<dbReference type="PRINTS" id="PR00984">
    <property type="entry name" value="TRNASYNTHILE"/>
</dbReference>
<dbReference type="SUPFAM" id="SSF47323">
    <property type="entry name" value="Anticodon-binding domain of a subclass of class I aminoacyl-tRNA synthetases"/>
    <property type="match status" value="1"/>
</dbReference>
<dbReference type="SUPFAM" id="SSF52374">
    <property type="entry name" value="Nucleotidylyl transferase"/>
    <property type="match status" value="1"/>
</dbReference>
<dbReference type="SUPFAM" id="SSF50677">
    <property type="entry name" value="ValRS/IleRS/LeuRS editing domain"/>
    <property type="match status" value="1"/>
</dbReference>
<dbReference type="PROSITE" id="PS00178">
    <property type="entry name" value="AA_TRNA_LIGASE_I"/>
    <property type="match status" value="1"/>
</dbReference>
<organism>
    <name type="scientific">Staphylococcus aureus (strain N315)</name>
    <dbReference type="NCBI Taxonomy" id="158879"/>
    <lineage>
        <taxon>Bacteria</taxon>
        <taxon>Bacillati</taxon>
        <taxon>Bacillota</taxon>
        <taxon>Bacilli</taxon>
        <taxon>Bacillales</taxon>
        <taxon>Staphylococcaceae</taxon>
        <taxon>Staphylococcus</taxon>
    </lineage>
</organism>
<comment type="function">
    <text evidence="1">Catalyzes the attachment of isoleucine to tRNA(Ile). As IleRS can inadvertently accommodate and process structurally similar amino acids such as valine, to avoid such errors it has two additional distinct tRNA(Ile)-dependent editing activities. One activity is designated as 'pretransfer' editing and involves the hydrolysis of activated Val-AMP. The other activity is designated 'posttransfer' editing and involves deacylation of mischarged Val-tRNA(Ile).</text>
</comment>
<comment type="catalytic activity">
    <reaction evidence="1">
        <text>tRNA(Ile) + L-isoleucine + ATP = L-isoleucyl-tRNA(Ile) + AMP + diphosphate</text>
        <dbReference type="Rhea" id="RHEA:11060"/>
        <dbReference type="Rhea" id="RHEA-COMP:9666"/>
        <dbReference type="Rhea" id="RHEA-COMP:9695"/>
        <dbReference type="ChEBI" id="CHEBI:30616"/>
        <dbReference type="ChEBI" id="CHEBI:33019"/>
        <dbReference type="ChEBI" id="CHEBI:58045"/>
        <dbReference type="ChEBI" id="CHEBI:78442"/>
        <dbReference type="ChEBI" id="CHEBI:78528"/>
        <dbReference type="ChEBI" id="CHEBI:456215"/>
        <dbReference type="EC" id="6.1.1.5"/>
    </reaction>
</comment>
<comment type="cofactor">
    <cofactor evidence="1">
        <name>Zn(2+)</name>
        <dbReference type="ChEBI" id="CHEBI:29105"/>
    </cofactor>
    <text evidence="1">Binds 1 zinc ion per subunit.</text>
</comment>
<comment type="subunit">
    <text evidence="1">Monomer.</text>
</comment>
<comment type="subcellular location">
    <subcellularLocation>
        <location evidence="1">Cytoplasm</location>
    </subcellularLocation>
</comment>
<comment type="domain">
    <text evidence="1">IleRS has two distinct active sites: one for aminoacylation and one for editing. The misactivated valine is translocated from the active site to the editing site, which sterically excludes the correctly activated isoleucine. The single editing site contains two valyl binding pockets, one specific for each substrate (Val-AMP or Val-tRNA(Ile)).</text>
</comment>
<comment type="similarity">
    <text evidence="1">Belongs to the class-I aminoacyl-tRNA synthetase family. IleS type 1 subfamily.</text>
</comment>
<name>SYI_STAAN</name>
<sequence>MDYKETLLMPKTDFPMRGGLPNKEPQIQEKWDAEDQYHKALEKNKGNETFILHDGPPYANGNLHMGHALNKILKDFIVRYKTMQGFYAPYVPGWDTHGLPIEQALTKKGVDRKKMSTAEFREKCKEFALEQIELQKKDFRRLGVRGDFNDPYITLKPEYEAAQIRIFGEMADKGLIYKGKKPVYWSPSSESSLAEAEIEYHDKRSASIYVAFDVKDDKGVVDADAKFIIWTTTPWTIPSNVAITVHPELKYGQYNVNGEKYIIAEALSDAVAEALDWDKASIKLEKEYTGKELEYVVAQHPFLDRESLVINGDHVTTDAGTGCVHTAPGHGEDDYIVGQKYELPVISPIDDKGVFTEEGGQFEGMFYDKANKAVTDLLTEKGALLKLDFITHSYPHDWRTKKPVIFRATPQWFASISKVRQDILDAIENTNFKVNWGKTRIYNMVRDRGEWVISRQRVWGVPLPVFYAENGEIIMTKETVNHVADLFAEHGSNIWFEREAKDLLPEGFTHPGSPNGTFTKETDIMDVWFDSGSSHRGVLETRPELSFPADMYLEGSDQYRGWFNSSITTSVATRGVSPYKFLLSHGFVMDGEGKKMSKSLGNVIVPDQVVKQKGADIARLWVSSTDYLADVRISDEILKQTSDVYRKIRNTLRFMLGNINDFNPDTDSIPESELLEVDRYLLNRLREFTASTINNYENFDYLNIYQEVQNFINVELSNFYLDYGKDILYIEQRDSHIRRSMQTVLYQILVDMTKLLAPILVHTAEEVWSHTPHVKEESVHLADMPKVVEVDQALLDKWRTFMNLRDDVNRALETARNEKVIGKSLEAKVTIASNDKFNASEFLTSFDALHQLFIVSQVKVVDKLDDQATAYEHGDIVIEHADGEKCERCWNYSEDLGAVDELTHLCPRCQQVVKSLV</sequence>
<feature type="chain" id="PRO_0000098469" description="Isoleucine--tRNA ligase">
    <location>
        <begin position="1"/>
        <end position="917"/>
    </location>
</feature>
<feature type="short sequence motif" description="'HIGH' region">
    <location>
        <begin position="57"/>
        <end position="67"/>
    </location>
</feature>
<feature type="short sequence motif" description="'KMSKS' region">
    <location>
        <begin position="595"/>
        <end position="599"/>
    </location>
</feature>
<feature type="binding site" evidence="1">
    <location>
        <position position="554"/>
    </location>
    <ligand>
        <name>L-isoleucyl-5'-AMP</name>
        <dbReference type="ChEBI" id="CHEBI:178002"/>
    </ligand>
</feature>
<feature type="binding site" evidence="1">
    <location>
        <position position="598"/>
    </location>
    <ligand>
        <name>ATP</name>
        <dbReference type="ChEBI" id="CHEBI:30616"/>
    </ligand>
</feature>
<feature type="binding site" evidence="1">
    <location>
        <position position="886"/>
    </location>
    <ligand>
        <name>Zn(2+)</name>
        <dbReference type="ChEBI" id="CHEBI:29105"/>
    </ligand>
</feature>
<feature type="binding site" evidence="1">
    <location>
        <position position="889"/>
    </location>
    <ligand>
        <name>Zn(2+)</name>
        <dbReference type="ChEBI" id="CHEBI:29105"/>
    </ligand>
</feature>
<feature type="binding site" evidence="1">
    <location>
        <position position="906"/>
    </location>
    <ligand>
        <name>Zn(2+)</name>
        <dbReference type="ChEBI" id="CHEBI:29105"/>
    </ligand>
</feature>
<feature type="binding site" evidence="1">
    <location>
        <position position="909"/>
    </location>
    <ligand>
        <name>Zn(2+)</name>
        <dbReference type="ChEBI" id="CHEBI:29105"/>
    </ligand>
</feature>
<reference key="1">
    <citation type="journal article" date="2001" name="Lancet">
        <title>Whole genome sequencing of meticillin-resistant Staphylococcus aureus.</title>
        <authorList>
            <person name="Kuroda M."/>
            <person name="Ohta T."/>
            <person name="Uchiyama I."/>
            <person name="Baba T."/>
            <person name="Yuzawa H."/>
            <person name="Kobayashi I."/>
            <person name="Cui L."/>
            <person name="Oguchi A."/>
            <person name="Aoki K."/>
            <person name="Nagai Y."/>
            <person name="Lian J.-Q."/>
            <person name="Ito T."/>
            <person name="Kanamori M."/>
            <person name="Matsumaru H."/>
            <person name="Maruyama A."/>
            <person name="Murakami H."/>
            <person name="Hosoyama A."/>
            <person name="Mizutani-Ui Y."/>
            <person name="Takahashi N.K."/>
            <person name="Sawano T."/>
            <person name="Inoue R."/>
            <person name="Kaito C."/>
            <person name="Sekimizu K."/>
            <person name="Hirakawa H."/>
            <person name="Kuhara S."/>
            <person name="Goto S."/>
            <person name="Yabuzaki J."/>
            <person name="Kanehisa M."/>
            <person name="Yamashita A."/>
            <person name="Oshima K."/>
            <person name="Furuya K."/>
            <person name="Yoshino C."/>
            <person name="Shiba T."/>
            <person name="Hattori M."/>
            <person name="Ogasawara N."/>
            <person name="Hayashi H."/>
            <person name="Hiramatsu K."/>
        </authorList>
    </citation>
    <scope>NUCLEOTIDE SEQUENCE [LARGE SCALE GENOMIC DNA]</scope>
    <source>
        <strain>N315</strain>
    </source>
</reference>
<reference key="2">
    <citation type="submission" date="2007-10" db="UniProtKB">
        <title>Shotgun proteomic analysis of total and membrane protein extracts of S. aureus strain N315.</title>
        <authorList>
            <person name="Vaezzadeh A.R."/>
            <person name="Deshusses J."/>
            <person name="Lescuyer P."/>
            <person name="Hochstrasser D.F."/>
        </authorList>
    </citation>
    <scope>IDENTIFICATION BY MASS SPECTROMETRY [LARGE SCALE ANALYSIS]</scope>
    <source>
        <strain>N315</strain>
    </source>
</reference>
<protein>
    <recommendedName>
        <fullName evidence="1">Isoleucine--tRNA ligase</fullName>
        <ecNumber evidence="1">6.1.1.5</ecNumber>
    </recommendedName>
    <alternativeName>
        <fullName evidence="1">Isoleucyl-tRNA synthetase</fullName>
        <shortName evidence="1">IleRS</shortName>
    </alternativeName>
</protein>
<keyword id="KW-0030">Aminoacyl-tRNA synthetase</keyword>
<keyword id="KW-0067">ATP-binding</keyword>
<keyword id="KW-0963">Cytoplasm</keyword>
<keyword id="KW-0436">Ligase</keyword>
<keyword id="KW-0479">Metal-binding</keyword>
<keyword id="KW-0547">Nucleotide-binding</keyword>
<keyword id="KW-0648">Protein biosynthesis</keyword>
<keyword id="KW-0862">Zinc</keyword>